<name>FMF3_ECOLX</name>
<organism>
    <name type="scientific">Escherichia coli</name>
    <dbReference type="NCBI Taxonomy" id="562"/>
    <lineage>
        <taxon>Bacteria</taxon>
        <taxon>Pseudomonadati</taxon>
        <taxon>Pseudomonadota</taxon>
        <taxon>Gammaproteobacteria</taxon>
        <taxon>Enterobacterales</taxon>
        <taxon>Enterobacteriaceae</taxon>
        <taxon>Escherichia</taxon>
    </lineage>
</organism>
<dbReference type="EMBL" id="AF022140">
    <property type="protein sequence ID" value="AAC45719.1"/>
    <property type="molecule type" value="Genomic_DNA"/>
</dbReference>
<dbReference type="PIR" id="A27625">
    <property type="entry name" value="YQECF7"/>
</dbReference>
<dbReference type="RefSeq" id="WP_061363423.1">
    <property type="nucleotide sequence ID" value="NZ_CAMPSY010000061.1"/>
</dbReference>
<dbReference type="SMR" id="P11312"/>
<dbReference type="GO" id="GO:0009289">
    <property type="term" value="C:pilus"/>
    <property type="evidence" value="ECO:0007669"/>
    <property type="project" value="UniProtKB-SubCell"/>
</dbReference>
<dbReference type="GO" id="GO:0043709">
    <property type="term" value="P:cell adhesion involved in single-species biofilm formation"/>
    <property type="evidence" value="ECO:0007669"/>
    <property type="project" value="TreeGrafter"/>
</dbReference>
<dbReference type="Gene3D" id="2.60.40.1090">
    <property type="entry name" value="Fimbrial-type adhesion domain"/>
    <property type="match status" value="1"/>
</dbReference>
<dbReference type="InterPro" id="IPR036937">
    <property type="entry name" value="Adhesion_dom_fimbrial_sf"/>
</dbReference>
<dbReference type="InterPro" id="IPR008966">
    <property type="entry name" value="Adhesion_dom_sf"/>
</dbReference>
<dbReference type="InterPro" id="IPR050263">
    <property type="entry name" value="Bact_Fimbrial_Adh_Pro"/>
</dbReference>
<dbReference type="InterPro" id="IPR039458">
    <property type="entry name" value="FimA-like"/>
</dbReference>
<dbReference type="PANTHER" id="PTHR33420:SF3">
    <property type="entry name" value="FIMBRIAL SUBUNIT ELFA"/>
    <property type="match status" value="1"/>
</dbReference>
<dbReference type="PANTHER" id="PTHR33420">
    <property type="entry name" value="FIMBRIAL SUBUNIT ELFA-RELATED"/>
    <property type="match status" value="1"/>
</dbReference>
<dbReference type="Pfam" id="PF16970">
    <property type="entry name" value="FimA"/>
    <property type="match status" value="1"/>
</dbReference>
<dbReference type="SUPFAM" id="SSF49401">
    <property type="entry name" value="Bacterial adhesins"/>
    <property type="match status" value="1"/>
</dbReference>
<feature type="signal peptide">
    <location>
        <begin position="1"/>
        <end position="21"/>
    </location>
</feature>
<feature type="chain" id="PRO_0000009189" description="F17 fimbrial protein">
    <location>
        <begin position="22"/>
        <end position="180"/>
    </location>
</feature>
<feature type="disulfide bond" evidence="1">
    <location>
        <begin position="37"/>
        <end position="77"/>
    </location>
</feature>
<accession>P11312</accession>
<accession>O30924</accession>
<comment type="function">
    <text>Fimbriae (also called pili), polar filaments radiating from the surface of the bacterium to a length of 0.5-1.5 micrometers and numbering 100-300 per cell, enable bacteria to colonize the epithelium of specific host organs.</text>
</comment>
<comment type="subcellular location">
    <subcellularLocation>
        <location>Fimbrium</location>
    </subcellularLocation>
</comment>
<comment type="similarity">
    <text evidence="1">Belongs to the fimbrial protein family.</text>
</comment>
<reference key="1">
    <citation type="journal article" date="1988" name="Infect. Immun.">
        <title>Isolation and nucleotide sequence of the F17-A gene encoding the structural protein of the F17 fimbriae in bovine enterotoxigenic Escherichia coli.</title>
        <authorList>
            <person name="Lintermans P."/>
            <person name="Pohl P."/>
            <person name="Deboeck F."/>
            <person name="Bertels A."/>
            <person name="Schlicker C."/>
            <person name="Vandekerckhove J."/>
            <person name="van Damme J."/>
            <person name="van Montagu M."/>
            <person name="de Greve H."/>
        </authorList>
    </citation>
    <scope>NUCLEOTIDE SEQUENCE [GENOMIC DNA]</scope>
</reference>
<reference key="2">
    <citation type="submission" date="1997-09" db="EMBL/GenBank/DDBJ databases">
        <title>Analysis of a gene cluster belonging to the F17 fimbrial gene family.</title>
        <authorList>
            <person name="de Greve H."/>
            <person name="Heng P."/>
            <person name="Deboeck F."/>
            <person name="Lin H.Y."/>
            <person name="Schlicker C."/>
            <person name="Lintermans P."/>
            <person name="Hernalsteens J.-P."/>
        </authorList>
    </citation>
    <scope>NUCLEOTIDE SEQUENCE [GENOMIC DNA]</scope>
    <scope>SEQUENCE REVISION TO 18 AND 104</scope>
    <source>
        <strain>25KH09ST</strain>
    </source>
</reference>
<evidence type="ECO:0000305" key="1"/>
<keyword id="KW-1015">Disulfide bond</keyword>
<keyword id="KW-0281">Fimbrium</keyword>
<keyword id="KW-0732">Signal</keyword>
<proteinExistence type="inferred from homology"/>
<protein>
    <recommendedName>
        <fullName>F17 fimbrial protein</fullName>
    </recommendedName>
    <alternativeName>
        <fullName>F17 fimbrial adhesive antigen</fullName>
    </alternativeName>
    <alternativeName>
        <fullName>F17 pilin</fullName>
    </alternativeName>
</protein>
<gene>
    <name type="primary">F17a-A</name>
</gene>
<sequence length="180" mass="18542">MQKIQFILGILAAASSSATLAYDGKITFNGKVVDQTCSVTTESKNLTVKLPTVSANSLASSGKVVGLTPFTILLEGCNTPAVTGAQNVNAYFEPNANTDYTTGNLTNTASSGASNVQIQLLNADGVKAIKLGQAAAAQSVDTVAINDANVTLRYNAQYYATGVATAGDVTSTVNYTIAYQ</sequence>